<name>AROB_SALDC</name>
<evidence type="ECO:0000255" key="1">
    <source>
        <dbReference type="HAMAP-Rule" id="MF_00110"/>
    </source>
</evidence>
<proteinExistence type="inferred from homology"/>
<feature type="chain" id="PRO_1000094596" description="3-dehydroquinate synthase">
    <location>
        <begin position="1"/>
        <end position="362"/>
    </location>
</feature>
<feature type="binding site" evidence="1">
    <location>
        <begin position="71"/>
        <end position="76"/>
    </location>
    <ligand>
        <name>NAD(+)</name>
        <dbReference type="ChEBI" id="CHEBI:57540"/>
    </ligand>
</feature>
<feature type="binding site" evidence="1">
    <location>
        <begin position="105"/>
        <end position="109"/>
    </location>
    <ligand>
        <name>NAD(+)</name>
        <dbReference type="ChEBI" id="CHEBI:57540"/>
    </ligand>
</feature>
<feature type="binding site" evidence="1">
    <location>
        <begin position="129"/>
        <end position="130"/>
    </location>
    <ligand>
        <name>NAD(+)</name>
        <dbReference type="ChEBI" id="CHEBI:57540"/>
    </ligand>
</feature>
<feature type="binding site" evidence="1">
    <location>
        <position position="142"/>
    </location>
    <ligand>
        <name>NAD(+)</name>
        <dbReference type="ChEBI" id="CHEBI:57540"/>
    </ligand>
</feature>
<feature type="binding site" evidence="1">
    <location>
        <position position="151"/>
    </location>
    <ligand>
        <name>NAD(+)</name>
        <dbReference type="ChEBI" id="CHEBI:57540"/>
    </ligand>
</feature>
<feature type="binding site" evidence="1">
    <location>
        <begin position="169"/>
        <end position="172"/>
    </location>
    <ligand>
        <name>NAD(+)</name>
        <dbReference type="ChEBI" id="CHEBI:57540"/>
    </ligand>
</feature>
<feature type="binding site" evidence="1">
    <location>
        <position position="184"/>
    </location>
    <ligand>
        <name>Zn(2+)</name>
        <dbReference type="ChEBI" id="CHEBI:29105"/>
    </ligand>
</feature>
<feature type="binding site" evidence="1">
    <location>
        <position position="247"/>
    </location>
    <ligand>
        <name>Zn(2+)</name>
        <dbReference type="ChEBI" id="CHEBI:29105"/>
    </ligand>
</feature>
<feature type="binding site" evidence="1">
    <location>
        <position position="264"/>
    </location>
    <ligand>
        <name>Zn(2+)</name>
        <dbReference type="ChEBI" id="CHEBI:29105"/>
    </ligand>
</feature>
<protein>
    <recommendedName>
        <fullName evidence="1">3-dehydroquinate synthase</fullName>
        <shortName evidence="1">DHQS</shortName>
        <ecNumber evidence="1">4.2.3.4</ecNumber>
    </recommendedName>
</protein>
<dbReference type="EC" id="4.2.3.4" evidence="1"/>
<dbReference type="EMBL" id="CP001144">
    <property type="protein sequence ID" value="ACH77333.1"/>
    <property type="molecule type" value="Genomic_DNA"/>
</dbReference>
<dbReference type="RefSeq" id="WP_000439824.1">
    <property type="nucleotide sequence ID" value="NC_011205.1"/>
</dbReference>
<dbReference type="SMR" id="B5FJQ9"/>
<dbReference type="KEGG" id="sed:SeD_A3854"/>
<dbReference type="HOGENOM" id="CLU_001201_0_2_6"/>
<dbReference type="UniPathway" id="UPA00053">
    <property type="reaction ID" value="UER00085"/>
</dbReference>
<dbReference type="Proteomes" id="UP000008322">
    <property type="component" value="Chromosome"/>
</dbReference>
<dbReference type="GO" id="GO:0005737">
    <property type="term" value="C:cytoplasm"/>
    <property type="evidence" value="ECO:0007669"/>
    <property type="project" value="UniProtKB-SubCell"/>
</dbReference>
<dbReference type="GO" id="GO:0003856">
    <property type="term" value="F:3-dehydroquinate synthase activity"/>
    <property type="evidence" value="ECO:0007669"/>
    <property type="project" value="UniProtKB-UniRule"/>
</dbReference>
<dbReference type="GO" id="GO:0046872">
    <property type="term" value="F:metal ion binding"/>
    <property type="evidence" value="ECO:0007669"/>
    <property type="project" value="UniProtKB-KW"/>
</dbReference>
<dbReference type="GO" id="GO:0000166">
    <property type="term" value="F:nucleotide binding"/>
    <property type="evidence" value="ECO:0007669"/>
    <property type="project" value="UniProtKB-KW"/>
</dbReference>
<dbReference type="GO" id="GO:0008652">
    <property type="term" value="P:amino acid biosynthetic process"/>
    <property type="evidence" value="ECO:0007669"/>
    <property type="project" value="UniProtKB-KW"/>
</dbReference>
<dbReference type="GO" id="GO:0009073">
    <property type="term" value="P:aromatic amino acid family biosynthetic process"/>
    <property type="evidence" value="ECO:0007669"/>
    <property type="project" value="UniProtKB-KW"/>
</dbReference>
<dbReference type="GO" id="GO:0009423">
    <property type="term" value="P:chorismate biosynthetic process"/>
    <property type="evidence" value="ECO:0007669"/>
    <property type="project" value="UniProtKB-UniRule"/>
</dbReference>
<dbReference type="CDD" id="cd08195">
    <property type="entry name" value="DHQS"/>
    <property type="match status" value="1"/>
</dbReference>
<dbReference type="FunFam" id="1.20.1090.10:FF:000002">
    <property type="entry name" value="3-dehydroquinate synthase"/>
    <property type="match status" value="1"/>
</dbReference>
<dbReference type="FunFam" id="3.40.50.1970:FF:000001">
    <property type="entry name" value="3-dehydroquinate synthase"/>
    <property type="match status" value="1"/>
</dbReference>
<dbReference type="Gene3D" id="3.40.50.1970">
    <property type="match status" value="1"/>
</dbReference>
<dbReference type="Gene3D" id="1.20.1090.10">
    <property type="entry name" value="Dehydroquinate synthase-like - alpha domain"/>
    <property type="match status" value="1"/>
</dbReference>
<dbReference type="HAMAP" id="MF_00110">
    <property type="entry name" value="DHQ_synthase"/>
    <property type="match status" value="1"/>
</dbReference>
<dbReference type="InterPro" id="IPR050071">
    <property type="entry name" value="Dehydroquinate_synthase"/>
</dbReference>
<dbReference type="InterPro" id="IPR016037">
    <property type="entry name" value="DHQ_synth_AroB"/>
</dbReference>
<dbReference type="InterPro" id="IPR030963">
    <property type="entry name" value="DHQ_synth_fam"/>
</dbReference>
<dbReference type="InterPro" id="IPR030960">
    <property type="entry name" value="DHQS/DOIS_N"/>
</dbReference>
<dbReference type="InterPro" id="IPR056179">
    <property type="entry name" value="DHQS_C"/>
</dbReference>
<dbReference type="NCBIfam" id="TIGR01357">
    <property type="entry name" value="aroB"/>
    <property type="match status" value="1"/>
</dbReference>
<dbReference type="PANTHER" id="PTHR43622">
    <property type="entry name" value="3-DEHYDROQUINATE SYNTHASE"/>
    <property type="match status" value="1"/>
</dbReference>
<dbReference type="PANTHER" id="PTHR43622:SF7">
    <property type="entry name" value="3-DEHYDROQUINATE SYNTHASE, CHLOROPLASTIC"/>
    <property type="match status" value="1"/>
</dbReference>
<dbReference type="Pfam" id="PF01761">
    <property type="entry name" value="DHQ_synthase"/>
    <property type="match status" value="1"/>
</dbReference>
<dbReference type="Pfam" id="PF24621">
    <property type="entry name" value="DHQS_C"/>
    <property type="match status" value="1"/>
</dbReference>
<dbReference type="PIRSF" id="PIRSF001455">
    <property type="entry name" value="DHQ_synth"/>
    <property type="match status" value="1"/>
</dbReference>
<dbReference type="SUPFAM" id="SSF56796">
    <property type="entry name" value="Dehydroquinate synthase-like"/>
    <property type="match status" value="1"/>
</dbReference>
<keyword id="KW-0028">Amino-acid biosynthesis</keyword>
<keyword id="KW-0057">Aromatic amino acid biosynthesis</keyword>
<keyword id="KW-0170">Cobalt</keyword>
<keyword id="KW-0963">Cytoplasm</keyword>
<keyword id="KW-0456">Lyase</keyword>
<keyword id="KW-0479">Metal-binding</keyword>
<keyword id="KW-0520">NAD</keyword>
<keyword id="KW-0547">Nucleotide-binding</keyword>
<keyword id="KW-0862">Zinc</keyword>
<organism>
    <name type="scientific">Salmonella dublin (strain CT_02021853)</name>
    <dbReference type="NCBI Taxonomy" id="439851"/>
    <lineage>
        <taxon>Bacteria</taxon>
        <taxon>Pseudomonadati</taxon>
        <taxon>Pseudomonadota</taxon>
        <taxon>Gammaproteobacteria</taxon>
        <taxon>Enterobacterales</taxon>
        <taxon>Enterobacteriaceae</taxon>
        <taxon>Salmonella</taxon>
    </lineage>
</organism>
<gene>
    <name evidence="1" type="primary">aroB</name>
    <name type="ordered locus">SeD_A3854</name>
</gene>
<reference key="1">
    <citation type="journal article" date="2011" name="J. Bacteriol.">
        <title>Comparative genomics of 28 Salmonella enterica isolates: evidence for CRISPR-mediated adaptive sublineage evolution.</title>
        <authorList>
            <person name="Fricke W.F."/>
            <person name="Mammel M.K."/>
            <person name="McDermott P.F."/>
            <person name="Tartera C."/>
            <person name="White D.G."/>
            <person name="Leclerc J.E."/>
            <person name="Ravel J."/>
            <person name="Cebula T.A."/>
        </authorList>
    </citation>
    <scope>NUCLEOTIDE SEQUENCE [LARGE SCALE GENOMIC DNA]</scope>
    <source>
        <strain>CT_02021853</strain>
    </source>
</reference>
<sequence>MERITVTLGERSYPITIAAGLFNEPASFLPLKSGDQVMLVTNETLAPLYLDKVRGVLERAGVNVDSVILPDGEQYKSLTVLDTVFTALLKKPHGRDTTLVALGGGVIGDLTGFAAASYQRGVRFIQVPTTLLSQVDSSVGGKTAVNHPLGKNMIGAFYQPASVVVDLDCLKTLPARELASGLAEVIKYGIILDADFFTWLEGNLDALLRLDGPAMAYCIRRCCELKAEVVAADEREAGLRALLNLGHTFGHAIEAEMGYGNWLHGEAVAAGIVMAARASERLGQFSSADTQRIIALLERAGLPVNGPCEMSAQDYLPHMLRDKKVLAGELRLVLPLAIGKSEVRGGVSHEVVLSAIADCQQA</sequence>
<accession>B5FJQ9</accession>
<comment type="function">
    <text evidence="1">Catalyzes the conversion of 3-deoxy-D-arabino-heptulosonate 7-phosphate (DAHP) to dehydroquinate (DHQ).</text>
</comment>
<comment type="catalytic activity">
    <reaction evidence="1">
        <text>7-phospho-2-dehydro-3-deoxy-D-arabino-heptonate = 3-dehydroquinate + phosphate</text>
        <dbReference type="Rhea" id="RHEA:21968"/>
        <dbReference type="ChEBI" id="CHEBI:32364"/>
        <dbReference type="ChEBI" id="CHEBI:43474"/>
        <dbReference type="ChEBI" id="CHEBI:58394"/>
        <dbReference type="EC" id="4.2.3.4"/>
    </reaction>
</comment>
<comment type="cofactor">
    <cofactor evidence="1">
        <name>Co(2+)</name>
        <dbReference type="ChEBI" id="CHEBI:48828"/>
    </cofactor>
    <cofactor evidence="1">
        <name>Zn(2+)</name>
        <dbReference type="ChEBI" id="CHEBI:29105"/>
    </cofactor>
    <text evidence="1">Binds 1 divalent metal cation per subunit. Can use either Co(2+) or Zn(2+).</text>
</comment>
<comment type="cofactor">
    <cofactor evidence="1">
        <name>NAD(+)</name>
        <dbReference type="ChEBI" id="CHEBI:57540"/>
    </cofactor>
</comment>
<comment type="pathway">
    <text evidence="1">Metabolic intermediate biosynthesis; chorismate biosynthesis; chorismate from D-erythrose 4-phosphate and phosphoenolpyruvate: step 2/7.</text>
</comment>
<comment type="subcellular location">
    <subcellularLocation>
        <location evidence="1">Cytoplasm</location>
    </subcellularLocation>
</comment>
<comment type="similarity">
    <text evidence="1">Belongs to the sugar phosphate cyclases superfamily. Dehydroquinate synthase family.</text>
</comment>